<dbReference type="EC" id="3.6.1.27" evidence="1"/>
<dbReference type="EMBL" id="CP001080">
    <property type="protein sequence ID" value="ACD66931.1"/>
    <property type="molecule type" value="Genomic_DNA"/>
</dbReference>
<dbReference type="RefSeq" id="WP_012459990.1">
    <property type="nucleotide sequence ID" value="NC_010730.1"/>
</dbReference>
<dbReference type="SMR" id="B2V5I7"/>
<dbReference type="STRING" id="436114.SYO3AOP1_1321"/>
<dbReference type="KEGG" id="sul:SYO3AOP1_1321"/>
<dbReference type="eggNOG" id="COG1968">
    <property type="taxonomic scope" value="Bacteria"/>
</dbReference>
<dbReference type="HOGENOM" id="CLU_060296_2_0_0"/>
<dbReference type="GO" id="GO:0005886">
    <property type="term" value="C:plasma membrane"/>
    <property type="evidence" value="ECO:0007669"/>
    <property type="project" value="UniProtKB-SubCell"/>
</dbReference>
<dbReference type="GO" id="GO:0050380">
    <property type="term" value="F:undecaprenyl-diphosphatase activity"/>
    <property type="evidence" value="ECO:0007669"/>
    <property type="project" value="UniProtKB-UniRule"/>
</dbReference>
<dbReference type="GO" id="GO:0071555">
    <property type="term" value="P:cell wall organization"/>
    <property type="evidence" value="ECO:0007669"/>
    <property type="project" value="UniProtKB-KW"/>
</dbReference>
<dbReference type="GO" id="GO:0009252">
    <property type="term" value="P:peptidoglycan biosynthetic process"/>
    <property type="evidence" value="ECO:0007669"/>
    <property type="project" value="UniProtKB-KW"/>
</dbReference>
<dbReference type="GO" id="GO:0008360">
    <property type="term" value="P:regulation of cell shape"/>
    <property type="evidence" value="ECO:0007669"/>
    <property type="project" value="UniProtKB-KW"/>
</dbReference>
<dbReference type="GO" id="GO:0046677">
    <property type="term" value="P:response to antibiotic"/>
    <property type="evidence" value="ECO:0007669"/>
    <property type="project" value="UniProtKB-UniRule"/>
</dbReference>
<dbReference type="HAMAP" id="MF_01006">
    <property type="entry name" value="Undec_diphosphatase"/>
    <property type="match status" value="1"/>
</dbReference>
<dbReference type="InterPro" id="IPR003824">
    <property type="entry name" value="UppP"/>
</dbReference>
<dbReference type="NCBIfam" id="NF001389">
    <property type="entry name" value="PRK00281.1-2"/>
    <property type="match status" value="1"/>
</dbReference>
<dbReference type="NCBIfam" id="NF001390">
    <property type="entry name" value="PRK00281.1-4"/>
    <property type="match status" value="1"/>
</dbReference>
<dbReference type="NCBIfam" id="TIGR00753">
    <property type="entry name" value="undec_PP_bacA"/>
    <property type="match status" value="1"/>
</dbReference>
<dbReference type="PANTHER" id="PTHR30622">
    <property type="entry name" value="UNDECAPRENYL-DIPHOSPHATASE"/>
    <property type="match status" value="1"/>
</dbReference>
<dbReference type="PANTHER" id="PTHR30622:SF3">
    <property type="entry name" value="UNDECAPRENYL-DIPHOSPHATASE"/>
    <property type="match status" value="1"/>
</dbReference>
<dbReference type="Pfam" id="PF02673">
    <property type="entry name" value="BacA"/>
    <property type="match status" value="1"/>
</dbReference>
<feature type="chain" id="PRO_1000197415" description="Undecaprenyl-diphosphatase">
    <location>
        <begin position="1"/>
        <end position="252"/>
    </location>
</feature>
<feature type="transmembrane region" description="Helical" evidence="1">
    <location>
        <begin position="1"/>
        <end position="21"/>
    </location>
</feature>
<feature type="transmembrane region" description="Helical" evidence="1">
    <location>
        <begin position="42"/>
        <end position="62"/>
    </location>
</feature>
<feature type="transmembrane region" description="Helical" evidence="1">
    <location>
        <begin position="74"/>
        <end position="94"/>
    </location>
</feature>
<feature type="transmembrane region" description="Helical" evidence="1">
    <location>
        <begin position="95"/>
        <end position="115"/>
    </location>
</feature>
<feature type="transmembrane region" description="Helical" evidence="1">
    <location>
        <begin position="172"/>
        <end position="192"/>
    </location>
</feature>
<feature type="transmembrane region" description="Helical" evidence="1">
    <location>
        <begin position="206"/>
        <end position="226"/>
    </location>
</feature>
<feature type="transmembrane region" description="Helical" evidence="1">
    <location>
        <begin position="232"/>
        <end position="252"/>
    </location>
</feature>
<reference key="1">
    <citation type="journal article" date="2009" name="J. Bacteriol.">
        <title>Complete and draft genome sequences of six members of the Aquificales.</title>
        <authorList>
            <person name="Reysenbach A.-L."/>
            <person name="Hamamura N."/>
            <person name="Podar M."/>
            <person name="Griffiths E."/>
            <person name="Ferreira S."/>
            <person name="Hochstein R."/>
            <person name="Heidelberg J."/>
            <person name="Johnson J."/>
            <person name="Mead D."/>
            <person name="Pohorille A."/>
            <person name="Sarmiento M."/>
            <person name="Schweighofer K."/>
            <person name="Seshadri R."/>
            <person name="Voytek M.A."/>
        </authorList>
    </citation>
    <scope>NUCLEOTIDE SEQUENCE [LARGE SCALE GENOMIC DNA]</scope>
    <source>
        <strain>YO3AOP1</strain>
    </source>
</reference>
<evidence type="ECO:0000255" key="1">
    <source>
        <dbReference type="HAMAP-Rule" id="MF_01006"/>
    </source>
</evidence>
<protein>
    <recommendedName>
        <fullName evidence="1">Undecaprenyl-diphosphatase</fullName>
        <ecNumber evidence="1">3.6.1.27</ecNumber>
    </recommendedName>
    <alternativeName>
        <fullName evidence="1">Bacitracin resistance protein</fullName>
    </alternativeName>
    <alternativeName>
        <fullName evidence="1">Undecaprenyl pyrophosphate phosphatase</fullName>
    </alternativeName>
</protein>
<keyword id="KW-0046">Antibiotic resistance</keyword>
<keyword id="KW-0997">Cell inner membrane</keyword>
<keyword id="KW-1003">Cell membrane</keyword>
<keyword id="KW-0133">Cell shape</keyword>
<keyword id="KW-0961">Cell wall biogenesis/degradation</keyword>
<keyword id="KW-0378">Hydrolase</keyword>
<keyword id="KW-0472">Membrane</keyword>
<keyword id="KW-0573">Peptidoglycan synthesis</keyword>
<keyword id="KW-0812">Transmembrane</keyword>
<keyword id="KW-1133">Transmembrane helix</keyword>
<name>UPPP_SULSY</name>
<proteinExistence type="inferred from homology"/>
<organism>
    <name type="scientific">Sulfurihydrogenibium sp. (strain YO3AOP1)</name>
    <dbReference type="NCBI Taxonomy" id="436114"/>
    <lineage>
        <taxon>Bacteria</taxon>
        <taxon>Pseudomonadati</taxon>
        <taxon>Aquificota</taxon>
        <taxon>Aquificia</taxon>
        <taxon>Aquificales</taxon>
        <taxon>Hydrogenothermaceae</taxon>
        <taxon>Sulfurihydrogenibium</taxon>
    </lineage>
</organism>
<comment type="function">
    <text evidence="1">Catalyzes the dephosphorylation of undecaprenyl diphosphate (UPP). Confers resistance to bacitracin.</text>
</comment>
<comment type="catalytic activity">
    <reaction evidence="1">
        <text>di-trans,octa-cis-undecaprenyl diphosphate + H2O = di-trans,octa-cis-undecaprenyl phosphate + phosphate + H(+)</text>
        <dbReference type="Rhea" id="RHEA:28094"/>
        <dbReference type="ChEBI" id="CHEBI:15377"/>
        <dbReference type="ChEBI" id="CHEBI:15378"/>
        <dbReference type="ChEBI" id="CHEBI:43474"/>
        <dbReference type="ChEBI" id="CHEBI:58405"/>
        <dbReference type="ChEBI" id="CHEBI:60392"/>
        <dbReference type="EC" id="3.6.1.27"/>
    </reaction>
</comment>
<comment type="subcellular location">
    <subcellularLocation>
        <location evidence="1">Cell inner membrane</location>
        <topology evidence="1">Multi-pass membrane protein</topology>
    </subcellularLocation>
</comment>
<comment type="miscellaneous">
    <text>Bacitracin is thought to be involved in the inhibition of peptidoglycan synthesis by sequestering undecaprenyl diphosphate, thereby reducing the pool of lipid carrier available.</text>
</comment>
<comment type="similarity">
    <text evidence="1">Belongs to the UppP family.</text>
</comment>
<accession>B2V5I7</accession>
<gene>
    <name evidence="1" type="primary">uppP</name>
    <name type="ordered locus">SYO3AOP1_1321</name>
</gene>
<sequence>MTTLEAVILGIVEGLTEFLPISSTGHLILVSNLLGIQQTEQHKAFEVSIQLGSILAVVFLYFKKFLDTNLMKRILIAFIPTGILGFVLYKIIKSLFNPYIVVFMLVFGGLLLILIELYHKNKSYDINSIYEVPYQKAFLIGVFQSLAMVPGTSRSGATIVGGLLLGLDRKTAAEFSFMLAVPTMFMATFYDVYKNRSNFNLSDWENLIVGFVVAFISALFAIKWLLKFISNHSFIPFGIYRIILGILYYLWY</sequence>